<proteinExistence type="inferred from homology"/>
<dbReference type="EC" id="2.1.1.-" evidence="1"/>
<dbReference type="EMBL" id="CP000553">
    <property type="protein sequence ID" value="ABM76430.1"/>
    <property type="molecule type" value="Genomic_DNA"/>
</dbReference>
<dbReference type="RefSeq" id="WP_011824411.1">
    <property type="nucleotide sequence ID" value="NC_008819.1"/>
</dbReference>
<dbReference type="SMR" id="A2C4M0"/>
<dbReference type="KEGG" id="pme:NATL1_18741"/>
<dbReference type="eggNOG" id="COG0357">
    <property type="taxonomic scope" value="Bacteria"/>
</dbReference>
<dbReference type="HOGENOM" id="CLU_065341_0_2_3"/>
<dbReference type="Proteomes" id="UP000002592">
    <property type="component" value="Chromosome"/>
</dbReference>
<dbReference type="GO" id="GO:0005829">
    <property type="term" value="C:cytosol"/>
    <property type="evidence" value="ECO:0007669"/>
    <property type="project" value="TreeGrafter"/>
</dbReference>
<dbReference type="GO" id="GO:0070043">
    <property type="term" value="F:rRNA (guanine-N7-)-methyltransferase activity"/>
    <property type="evidence" value="ECO:0007669"/>
    <property type="project" value="UniProtKB-UniRule"/>
</dbReference>
<dbReference type="FunFam" id="3.40.50.150:FF:000041">
    <property type="entry name" value="Ribosomal RNA small subunit methyltransferase G"/>
    <property type="match status" value="1"/>
</dbReference>
<dbReference type="Gene3D" id="3.40.50.150">
    <property type="entry name" value="Vaccinia Virus protein VP39"/>
    <property type="match status" value="1"/>
</dbReference>
<dbReference type="HAMAP" id="MF_00074">
    <property type="entry name" value="16SrRNA_methyltr_G"/>
    <property type="match status" value="1"/>
</dbReference>
<dbReference type="InterPro" id="IPR003682">
    <property type="entry name" value="rRNA_ssu_MeTfrase_G"/>
</dbReference>
<dbReference type="InterPro" id="IPR029063">
    <property type="entry name" value="SAM-dependent_MTases_sf"/>
</dbReference>
<dbReference type="NCBIfam" id="TIGR00138">
    <property type="entry name" value="rsmG_gidB"/>
    <property type="match status" value="1"/>
</dbReference>
<dbReference type="PANTHER" id="PTHR31760">
    <property type="entry name" value="S-ADENOSYL-L-METHIONINE-DEPENDENT METHYLTRANSFERASES SUPERFAMILY PROTEIN"/>
    <property type="match status" value="1"/>
</dbReference>
<dbReference type="PANTHER" id="PTHR31760:SF0">
    <property type="entry name" value="S-ADENOSYL-L-METHIONINE-DEPENDENT METHYLTRANSFERASES SUPERFAMILY PROTEIN"/>
    <property type="match status" value="1"/>
</dbReference>
<dbReference type="Pfam" id="PF02527">
    <property type="entry name" value="GidB"/>
    <property type="match status" value="1"/>
</dbReference>
<dbReference type="PIRSF" id="PIRSF003078">
    <property type="entry name" value="GidB"/>
    <property type="match status" value="1"/>
</dbReference>
<dbReference type="SUPFAM" id="SSF53335">
    <property type="entry name" value="S-adenosyl-L-methionine-dependent methyltransferases"/>
    <property type="match status" value="1"/>
</dbReference>
<accession>A2C4M0</accession>
<evidence type="ECO:0000255" key="1">
    <source>
        <dbReference type="HAMAP-Rule" id="MF_00074"/>
    </source>
</evidence>
<protein>
    <recommendedName>
        <fullName evidence="1">Ribosomal RNA small subunit methyltransferase G</fullName>
        <ecNumber evidence="1">2.1.1.-</ecNumber>
    </recommendedName>
    <alternativeName>
        <fullName evidence="1">16S rRNA 7-methylguanosine methyltransferase</fullName>
        <shortName evidence="1">16S rRNA m7G methyltransferase</shortName>
    </alternativeName>
</protein>
<sequence length="248" mass="28060">MSTDKKNRTVSHLMIWNELKWAPSEKQLAQFIHLQELLKEWNKKINLTRLVDGDDFWTAQVCDSLLPLYEELQHPEVSHKYIDIGSGCGFPGIAIAIAMPNSDITLLDSSSKKTTFLKEVSKEIGLDSRIKVVTERAEEAGRNPIFRSNFDYAIARAVASANVVAEYLVPFLNSTGQALIFKGSWSEAEQQILKKALAELNAEIQRTHEFILPNNRGIRNIIRISSINKCPHQYPRSIGKPKKQPLGY</sequence>
<organism>
    <name type="scientific">Prochlorococcus marinus (strain NATL1A)</name>
    <dbReference type="NCBI Taxonomy" id="167555"/>
    <lineage>
        <taxon>Bacteria</taxon>
        <taxon>Bacillati</taxon>
        <taxon>Cyanobacteriota</taxon>
        <taxon>Cyanophyceae</taxon>
        <taxon>Synechococcales</taxon>
        <taxon>Prochlorococcaceae</taxon>
        <taxon>Prochlorococcus</taxon>
    </lineage>
</organism>
<keyword id="KW-0963">Cytoplasm</keyword>
<keyword id="KW-0489">Methyltransferase</keyword>
<keyword id="KW-0698">rRNA processing</keyword>
<keyword id="KW-0949">S-adenosyl-L-methionine</keyword>
<keyword id="KW-0808">Transferase</keyword>
<reference key="1">
    <citation type="journal article" date="2007" name="PLoS Genet.">
        <title>Patterns and implications of gene gain and loss in the evolution of Prochlorococcus.</title>
        <authorList>
            <person name="Kettler G.C."/>
            <person name="Martiny A.C."/>
            <person name="Huang K."/>
            <person name="Zucker J."/>
            <person name="Coleman M.L."/>
            <person name="Rodrigue S."/>
            <person name="Chen F."/>
            <person name="Lapidus A."/>
            <person name="Ferriera S."/>
            <person name="Johnson J."/>
            <person name="Steglich C."/>
            <person name="Church G.M."/>
            <person name="Richardson P."/>
            <person name="Chisholm S.W."/>
        </authorList>
    </citation>
    <scope>NUCLEOTIDE SEQUENCE [LARGE SCALE GENOMIC DNA]</scope>
    <source>
        <strain>NATL1A</strain>
    </source>
</reference>
<comment type="function">
    <text evidence="1">Specifically methylates the N7 position of a guanine in 16S rRNA.</text>
</comment>
<comment type="subcellular location">
    <subcellularLocation>
        <location evidence="1">Cytoplasm</location>
    </subcellularLocation>
</comment>
<comment type="similarity">
    <text evidence="1">Belongs to the methyltransferase superfamily. RNA methyltransferase RsmG family.</text>
</comment>
<feature type="chain" id="PRO_0000335399" description="Ribosomal RNA small subunit methyltransferase G">
    <location>
        <begin position="1"/>
        <end position="248"/>
    </location>
</feature>
<feature type="binding site" evidence="1">
    <location>
        <position position="85"/>
    </location>
    <ligand>
        <name>S-adenosyl-L-methionine</name>
        <dbReference type="ChEBI" id="CHEBI:59789"/>
    </ligand>
</feature>
<feature type="binding site" evidence="1">
    <location>
        <position position="90"/>
    </location>
    <ligand>
        <name>S-adenosyl-L-methionine</name>
        <dbReference type="ChEBI" id="CHEBI:59789"/>
    </ligand>
</feature>
<feature type="binding site" evidence="1">
    <location>
        <begin position="108"/>
        <end position="110"/>
    </location>
    <ligand>
        <name>S-adenosyl-L-methionine</name>
        <dbReference type="ChEBI" id="CHEBI:59789"/>
    </ligand>
</feature>
<feature type="binding site" evidence="1">
    <location>
        <begin position="137"/>
        <end position="138"/>
    </location>
    <ligand>
        <name>S-adenosyl-L-methionine</name>
        <dbReference type="ChEBI" id="CHEBI:59789"/>
    </ligand>
</feature>
<feature type="binding site" evidence="1">
    <location>
        <position position="156"/>
    </location>
    <ligand>
        <name>S-adenosyl-L-methionine</name>
        <dbReference type="ChEBI" id="CHEBI:59789"/>
    </ligand>
</feature>
<gene>
    <name evidence="1" type="primary">rsmG</name>
    <name type="ordered locus">NATL1_18741</name>
</gene>
<name>RSMG_PROM1</name>